<accession>A3N0M3</accession>
<keyword id="KW-1185">Reference proteome</keyword>
<gene>
    <name type="ordered locus">APL_0863</name>
</gene>
<dbReference type="EMBL" id="CP000569">
    <property type="protein sequence ID" value="ABN73959.1"/>
    <property type="molecule type" value="Genomic_DNA"/>
</dbReference>
<dbReference type="SMR" id="A3N0M3"/>
<dbReference type="STRING" id="416269.APL_0863"/>
<dbReference type="EnsemblBacteria" id="ABN73959">
    <property type="protein sequence ID" value="ABN73959"/>
    <property type="gene ID" value="APL_0863"/>
</dbReference>
<dbReference type="KEGG" id="apl:APL_0863"/>
<dbReference type="eggNOG" id="COG3140">
    <property type="taxonomic scope" value="Bacteria"/>
</dbReference>
<dbReference type="HOGENOM" id="CLU_185263_1_1_6"/>
<dbReference type="Proteomes" id="UP000001432">
    <property type="component" value="Chromosome"/>
</dbReference>
<dbReference type="HAMAP" id="MF_00507">
    <property type="entry name" value="UPF0181"/>
    <property type="match status" value="1"/>
</dbReference>
<dbReference type="InterPro" id="IPR005371">
    <property type="entry name" value="UPF0181"/>
</dbReference>
<dbReference type="NCBIfam" id="NF003476">
    <property type="entry name" value="PRK05114.1"/>
    <property type="match status" value="1"/>
</dbReference>
<dbReference type="Pfam" id="PF03701">
    <property type="entry name" value="UPF0181"/>
    <property type="match status" value="1"/>
</dbReference>
<name>Y863_ACTP2</name>
<proteinExistence type="inferred from homology"/>
<protein>
    <recommendedName>
        <fullName evidence="1">UPF0181 protein APL_0863</fullName>
    </recommendedName>
</protein>
<sequence>MDNALLSLTHEQQQAAVEQIQELMAQGVSSGEAIQIIANRLREAHQNNTSENNS</sequence>
<organism>
    <name type="scientific">Actinobacillus pleuropneumoniae serotype 5b (strain L20)</name>
    <dbReference type="NCBI Taxonomy" id="416269"/>
    <lineage>
        <taxon>Bacteria</taxon>
        <taxon>Pseudomonadati</taxon>
        <taxon>Pseudomonadota</taxon>
        <taxon>Gammaproteobacteria</taxon>
        <taxon>Pasteurellales</taxon>
        <taxon>Pasteurellaceae</taxon>
        <taxon>Actinobacillus</taxon>
    </lineage>
</organism>
<evidence type="ECO:0000255" key="1">
    <source>
        <dbReference type="HAMAP-Rule" id="MF_00507"/>
    </source>
</evidence>
<feature type="chain" id="PRO_1000014968" description="UPF0181 protein APL_0863">
    <location>
        <begin position="1"/>
        <end position="54"/>
    </location>
</feature>
<reference key="1">
    <citation type="journal article" date="2008" name="J. Bacteriol.">
        <title>The complete genome sequence of Actinobacillus pleuropneumoniae L20 (serotype 5b).</title>
        <authorList>
            <person name="Foote S.J."/>
            <person name="Bosse J.T."/>
            <person name="Bouevitch A.B."/>
            <person name="Langford P.R."/>
            <person name="Young N.M."/>
            <person name="Nash J.H.E."/>
        </authorList>
    </citation>
    <scope>NUCLEOTIDE SEQUENCE [LARGE SCALE GENOMIC DNA]</scope>
    <source>
        <strain>L20</strain>
    </source>
</reference>
<comment type="similarity">
    <text evidence="1">Belongs to the UPF0181 family.</text>
</comment>